<gene>
    <name type="primary">dcs-1</name>
    <name type="synonym">hsl-1</name>
    <name type="ORF">Y113G7A.9</name>
</gene>
<keyword id="KW-0378">Hydrolase</keyword>
<keyword id="KW-0539">Nucleus</keyword>
<keyword id="KW-1185">Reference proteome</keyword>
<keyword id="KW-0346">Stress response</keyword>
<protein>
    <recommendedName>
        <fullName>m7GpppX diphosphatase</fullName>
        <ecNumber evidence="2 3 4">3.6.1.59</ecNumber>
    </recommendedName>
    <alternativeName>
        <fullName>Decapping scavenger enzyme</fullName>
    </alternativeName>
    <alternativeName>
        <fullName>Heat shock-like protein</fullName>
    </alternativeName>
    <alternativeName>
        <fullName>Protein DCS-1</fullName>
    </alternativeName>
    <alternativeName>
        <fullName>Scavenger mRNA-decapping enzyme DcpS</fullName>
    </alternativeName>
</protein>
<organism>
    <name type="scientific">Caenorhabditis elegans</name>
    <dbReference type="NCBI Taxonomy" id="6239"/>
    <lineage>
        <taxon>Eukaryota</taxon>
        <taxon>Metazoa</taxon>
        <taxon>Ecdysozoa</taxon>
        <taxon>Nematoda</taxon>
        <taxon>Chromadorea</taxon>
        <taxon>Rhabditida</taxon>
        <taxon>Rhabditina</taxon>
        <taxon>Rhabditomorpha</taxon>
        <taxon>Rhabditoidea</taxon>
        <taxon>Rhabditidae</taxon>
        <taxon>Peloderinae</taxon>
        <taxon>Caenorhabditis</taxon>
    </lineage>
</organism>
<proteinExistence type="evidence at protein level"/>
<accession>G5EFS4</accession>
<name>DCPS_CAEEL</name>
<feature type="chain" id="PRO_0000420574" description="m7GpppX diphosphatase">
    <location>
        <begin position="1"/>
        <end position="311"/>
    </location>
</feature>
<feature type="short sequence motif" description="Histidine triad motif" evidence="1">
    <location>
        <begin position="249"/>
        <end position="253"/>
    </location>
</feature>
<feature type="active site" description="Nucleophile" evidence="1">
    <location>
        <position position="251"/>
    </location>
</feature>
<feature type="binding site" evidence="1">
    <location>
        <position position="159"/>
    </location>
    <ligand>
        <name>substrate</name>
    </ligand>
</feature>
<feature type="binding site" evidence="1">
    <location>
        <position position="181"/>
    </location>
    <ligand>
        <name>substrate</name>
    </ligand>
</feature>
<feature type="binding site" evidence="1">
    <location>
        <begin position="242"/>
        <end position="253"/>
    </location>
    <ligand>
        <name>substrate</name>
    </ligand>
</feature>
<evidence type="ECO:0000250" key="1"/>
<evidence type="ECO:0000269" key="2">
    <source>
    </source>
</evidence>
<evidence type="ECO:0000269" key="3">
    <source>
    </source>
</evidence>
<evidence type="ECO:0000269" key="4">
    <source>
    </source>
</evidence>
<evidence type="ECO:0000305" key="5"/>
<comment type="function">
    <text evidence="2 3 4">Decapping scavenger enzyme that catalyzes the cleavage of a residual cap structure following the degradation of mRNAs of the 3'-&gt;5' exosome-mediated mRNA decay pathway. Hydrolyzes cap analog structures like 7-methylguanosine nucleoside triphosphate (m7GpppG) and tri-methyl guanosine nucleoside triphosphate (m3(2,2,7)GpppG) with up to 2 nucleotide substrates (small capped oligoribonucleotides) and specifically releases 5'-phosphorylated RNA fragments and 7-methylguanosine monophosphate (m7GMP). Does not hydrolyze unmethylated cap analog (GpppG) and shows no decapping activity on intact m7GpppG-capped mRNA molecules. Does not hydrolyze 7-methylguanosine diphosphate (m7GDP) and tri-methylguanosine diphosphate (m3(2,2,7)GDP) to m(7)GMP and m3(2,2,7)GMP, respectively (PubMed:22985415). May also play a role in the 5'-&gt;3 mRNA decay pathway; m7GDP, the downstream product released by the 5'-&gt;3' mRNA mediated decapping activity, may be also converted by dcs-1 to m7GMP. Binds to m7GpppG and strongly to m7GDP.</text>
</comment>
<comment type="catalytic activity">
    <reaction evidence="2 3 4">
        <text>a 5'-end (N(7)-methyl 5'-triphosphoguanosine)-ribonucleoside in mRNA + H2O = N(7)-methyl-GMP + a 5'-end diphospho-ribonucleoside in mRNA + 2 H(+)</text>
        <dbReference type="Rhea" id="RHEA:65388"/>
        <dbReference type="Rhea" id="RHEA-COMP:17165"/>
        <dbReference type="Rhea" id="RHEA-COMP:17167"/>
        <dbReference type="ChEBI" id="CHEBI:15377"/>
        <dbReference type="ChEBI" id="CHEBI:15378"/>
        <dbReference type="ChEBI" id="CHEBI:58285"/>
        <dbReference type="ChEBI" id="CHEBI:156461"/>
        <dbReference type="ChEBI" id="CHEBI:167616"/>
        <dbReference type="EC" id="3.6.1.59"/>
    </reaction>
</comment>
<comment type="catalytic activity">
    <reaction evidence="3">
        <text>a 5'-end (N(2),N(2),N(7)-trimethyl 5'-triphosphoguanosine)-ribonucleoside in mRNA + H2O = (N(2),N(2),N(7))-trimethyl-GMP + a 5'-end diphospho-ribonucleoside in mRNA + 2 H(+)</text>
        <dbReference type="Rhea" id="RHEA:65384"/>
        <dbReference type="Rhea" id="RHEA-COMP:17165"/>
        <dbReference type="Rhea" id="RHEA-COMP:17171"/>
        <dbReference type="ChEBI" id="CHEBI:15377"/>
        <dbReference type="ChEBI" id="CHEBI:15378"/>
        <dbReference type="ChEBI" id="CHEBI:74434"/>
        <dbReference type="ChEBI" id="CHEBI:167616"/>
        <dbReference type="ChEBI" id="CHEBI:167623"/>
        <dbReference type="EC" id="3.6.1.59"/>
    </reaction>
</comment>
<comment type="activity regulation">
    <text evidence="4">The hydrolytic product 7-methylguanosine diphosphate (m7GDP) efficiently inhibits the decapping scavenger activity and acts as a competitive inhibitor in vitro.</text>
</comment>
<comment type="biophysicochemical properties">
    <kinetics>
        <KM evidence="2">1.2 uM for m7GpppBODIPY</KM>
        <KM evidence="2">8.52 uM for GpppBODIPY</KM>
        <KM evidence="2">5.04 uM for ApppBODIPY</KM>
        <text>kcat is 0.174 sec(-1) with m7GpppBODIPY as substrate. The catalytic efficiency with m7GpppBODIPY is at least 35- to 75-fold higher than with ApppBODIPY and GpppBODIPY as substrates, respectively.</text>
    </kinetics>
</comment>
<comment type="subcellular location">
    <subcellularLocation>
        <location>Nucleus</location>
    </subcellularLocation>
</comment>
<comment type="tissue specificity">
    <text evidence="2">Expressed in neurons in the ventral cord, the nerve ring and the pharynx.</text>
</comment>
<comment type="developmental stage">
    <text evidence="2">Expressed in the embryo during all developmental stages.</text>
</comment>
<comment type="induction">
    <text evidence="2">Up-regulated by heat schock.</text>
</comment>
<comment type="similarity">
    <text evidence="5">Belongs to the HIT family.</text>
</comment>
<sequence length="311" mass="36477">MKRIADEELVREERAEESTQKWLQDAKFQEILGADSSHKSLFVLLSHPDGSQGILLANKSPFSEEKSDIEKLLATAQLQEISRNDIFGSYNIEIDPKLNLLKSQLIYPINDRLIAKYRQEEKFVIRETPELYETVTRPYIEKYQLNLNWVYNCLEKRSEVDKIVFEDPDNENGFVLLQDIKWDGKTLENLYVLAICHRHGLKSVRDLTGDDLEMLYNMRDKSLEAINQKYGLKTDQIKCYFHYQPSFYHLHVHFINLKYDAPASTTMSAILLDDVINNLELNPEHYKKSTLTFTRKNGDKLMEMFREALKN</sequence>
<dbReference type="EC" id="3.6.1.59" evidence="2 3 4"/>
<dbReference type="EMBL" id="AL132858">
    <property type="protein sequence ID" value="CAB60481.1"/>
    <property type="molecule type" value="Genomic_DNA"/>
</dbReference>
<dbReference type="EMBL" id="AY079166">
    <property type="protein sequence ID" value="AAL86013.1"/>
    <property type="molecule type" value="mRNA"/>
</dbReference>
<dbReference type="RefSeq" id="NP_001256897.1">
    <property type="nucleotide sequence ID" value="NM_001269968.2"/>
</dbReference>
<dbReference type="SMR" id="G5EFS4"/>
<dbReference type="BioGRID" id="45275">
    <property type="interactions" value="8"/>
</dbReference>
<dbReference type="FunCoup" id="G5EFS4">
    <property type="interactions" value="2554"/>
</dbReference>
<dbReference type="STRING" id="6239.Y113G7A.9a.1"/>
<dbReference type="PaxDb" id="6239-Y113G7A.9a"/>
<dbReference type="PeptideAtlas" id="G5EFS4"/>
<dbReference type="EnsemblMetazoa" id="Y113G7A.9a.1">
    <property type="protein sequence ID" value="Y113G7A.9a.1"/>
    <property type="gene ID" value="WBGene00000940"/>
</dbReference>
<dbReference type="GeneID" id="180315"/>
<dbReference type="KEGG" id="cel:CELE_Y113G7A.9"/>
<dbReference type="AGR" id="WB:WBGene00000940"/>
<dbReference type="CTD" id="180315"/>
<dbReference type="WormBase" id="Y113G7A.9a">
    <property type="protein sequence ID" value="CE23280"/>
    <property type="gene ID" value="WBGene00000940"/>
    <property type="gene designation" value="dcs-1"/>
</dbReference>
<dbReference type="eggNOG" id="KOG3969">
    <property type="taxonomic scope" value="Eukaryota"/>
</dbReference>
<dbReference type="GeneTree" id="ENSGT00390000003924"/>
<dbReference type="HOGENOM" id="CLU_041045_2_0_1"/>
<dbReference type="InParanoid" id="G5EFS4"/>
<dbReference type="OMA" id="RAYFHYQ"/>
<dbReference type="OrthoDB" id="10264956at2759"/>
<dbReference type="PhylomeDB" id="G5EFS4"/>
<dbReference type="BRENDA" id="3.6.1.59">
    <property type="organism ID" value="1045"/>
</dbReference>
<dbReference type="Reactome" id="R-CEL-429958">
    <property type="pathway name" value="mRNA decay by 3' to 5' exoribonuclease"/>
</dbReference>
<dbReference type="PRO" id="PR:G5EFS4"/>
<dbReference type="Proteomes" id="UP000001940">
    <property type="component" value="Chromosome V"/>
</dbReference>
<dbReference type="Bgee" id="WBGene00000940">
    <property type="expression patterns" value="Expressed in germ line (C elegans) and 4 other cell types or tissues"/>
</dbReference>
<dbReference type="ExpressionAtlas" id="G5EFS4">
    <property type="expression patterns" value="baseline and differential"/>
</dbReference>
<dbReference type="GO" id="GO:0005737">
    <property type="term" value="C:cytoplasm"/>
    <property type="evidence" value="ECO:0000314"/>
    <property type="project" value="WormBase"/>
</dbReference>
<dbReference type="GO" id="GO:0005634">
    <property type="term" value="C:nucleus"/>
    <property type="evidence" value="ECO:0000314"/>
    <property type="project" value="UniProtKB"/>
</dbReference>
<dbReference type="GO" id="GO:0000932">
    <property type="term" value="C:P-body"/>
    <property type="evidence" value="ECO:0000318"/>
    <property type="project" value="GO_Central"/>
</dbReference>
<dbReference type="GO" id="GO:0140932">
    <property type="term" value="F:5'-(N(7)-methyl 5'-triphosphoguanosine)-[mRNA] diphosphatase activity"/>
    <property type="evidence" value="ECO:0000314"/>
    <property type="project" value="UniProtKB"/>
</dbReference>
<dbReference type="GO" id="GO:0047627">
    <property type="term" value="F:adenylylsulfatase activity"/>
    <property type="evidence" value="ECO:0000314"/>
    <property type="project" value="WormBase"/>
</dbReference>
<dbReference type="GO" id="GO:0000340">
    <property type="term" value="F:RNA 7-methylguanosine cap binding"/>
    <property type="evidence" value="ECO:0000314"/>
    <property type="project" value="UniProtKB"/>
</dbReference>
<dbReference type="GO" id="GO:0004780">
    <property type="term" value="F:sulfate adenylyltransferase (ADP) activity"/>
    <property type="evidence" value="ECO:0000314"/>
    <property type="project" value="WormBase"/>
</dbReference>
<dbReference type="GO" id="GO:0000290">
    <property type="term" value="P:deadenylation-dependent decapping of nuclear-transcribed mRNA"/>
    <property type="evidence" value="ECO:0000318"/>
    <property type="project" value="GO_Central"/>
</dbReference>
<dbReference type="GO" id="GO:0110156">
    <property type="term" value="P:mRNA methylguanosine-cap decapping"/>
    <property type="evidence" value="ECO:0000314"/>
    <property type="project" value="WormBase"/>
</dbReference>
<dbReference type="GO" id="GO:0000288">
    <property type="term" value="P:nuclear-transcribed mRNA catabolic process, deadenylation-dependent decay"/>
    <property type="evidence" value="ECO:0000304"/>
    <property type="project" value="UniProtKB"/>
</dbReference>
<dbReference type="GO" id="GO:0009150">
    <property type="term" value="P:purine ribonucleotide metabolic process"/>
    <property type="evidence" value="ECO:0000314"/>
    <property type="project" value="WormBase"/>
</dbReference>
<dbReference type="GO" id="GO:0009408">
    <property type="term" value="P:response to heat"/>
    <property type="evidence" value="ECO:0000314"/>
    <property type="project" value="UniProtKB"/>
</dbReference>
<dbReference type="GO" id="GO:0006401">
    <property type="term" value="P:RNA catabolic process"/>
    <property type="evidence" value="ECO:0000314"/>
    <property type="project" value="WormBase"/>
</dbReference>
<dbReference type="GO" id="GO:0006790">
    <property type="term" value="P:sulfur compound metabolic process"/>
    <property type="evidence" value="ECO:0000314"/>
    <property type="project" value="WormBase"/>
</dbReference>
<dbReference type="FunFam" id="3.30.200.40:FF:000003">
    <property type="entry name" value="m7GpppX diphosphatase"/>
    <property type="match status" value="1"/>
</dbReference>
<dbReference type="FunFam" id="3.30.428.10:FF:000006">
    <property type="entry name" value="m7GpppX diphosphatase"/>
    <property type="match status" value="1"/>
</dbReference>
<dbReference type="Gene3D" id="3.30.428.10">
    <property type="entry name" value="HIT-like"/>
    <property type="match status" value="1"/>
</dbReference>
<dbReference type="Gene3D" id="3.30.200.40">
    <property type="entry name" value="Scavenger mRNA decapping enzyme, N-terminal domain"/>
    <property type="match status" value="1"/>
</dbReference>
<dbReference type="InterPro" id="IPR008594">
    <property type="entry name" value="DcpS/DCS2"/>
</dbReference>
<dbReference type="InterPro" id="IPR036265">
    <property type="entry name" value="HIT-like_sf"/>
</dbReference>
<dbReference type="InterPro" id="IPR011145">
    <property type="entry name" value="Scavenger_mRNA_decap_enz_N"/>
</dbReference>
<dbReference type="PANTHER" id="PTHR12978">
    <property type="entry name" value="HISTIDINE TRIAD HIT PROTEIN MEMBER"/>
    <property type="match status" value="1"/>
</dbReference>
<dbReference type="PANTHER" id="PTHR12978:SF0">
    <property type="entry name" value="M7GPPPX DIPHOSPHATASE"/>
    <property type="match status" value="1"/>
</dbReference>
<dbReference type="Pfam" id="PF05652">
    <property type="entry name" value="DcpS"/>
    <property type="match status" value="1"/>
</dbReference>
<dbReference type="Pfam" id="PF11969">
    <property type="entry name" value="DcpS_C"/>
    <property type="match status" value="1"/>
</dbReference>
<dbReference type="PIRSF" id="PIRSF028973">
    <property type="entry name" value="Scavenger_mRNA_decap_enz"/>
    <property type="match status" value="1"/>
</dbReference>
<dbReference type="SUPFAM" id="SSF54197">
    <property type="entry name" value="HIT-like"/>
    <property type="match status" value="1"/>
</dbReference>
<dbReference type="SUPFAM" id="SSF102860">
    <property type="entry name" value="mRNA decapping enzyme DcpS N-terminal domain"/>
    <property type="match status" value="1"/>
</dbReference>
<reference key="1">
    <citation type="journal article" date="2003" name="J. Biol. Chem.">
        <title>Coordinate expression of NADPH-dependent flavin reductase, Fre-1, and Hint-related 7meGMP-directed hydrolase, DCS-1.</title>
        <authorList>
            <person name="Kwasnicka D.A."/>
            <person name="Krakowiak A."/>
            <person name="Thacker C."/>
            <person name="Brenner C."/>
            <person name="Vincent S.R."/>
        </authorList>
    </citation>
    <scope>NUCLEOTIDE SEQUENCE [MRNA]</scope>
    <scope>FUNCTION</scope>
    <scope>CATALYTIC ACTIVITY</scope>
    <scope>SUBSTRATE SPECIFICITY</scope>
    <scope>BIOPHYSICOCHEMICAL PROPERTIES</scope>
    <scope>INDUCTION</scope>
    <scope>SUBCELLULAR LOCALIZATION</scope>
    <scope>TISSUE SPECIFICITY</scope>
    <scope>DEVELOPMENTAL STAGE</scope>
</reference>
<reference key="2">
    <citation type="journal article" date="1998" name="Science">
        <title>Genome sequence of the nematode C. elegans: a platform for investigating biology.</title>
        <authorList>
            <consortium name="The C. elegans sequencing consortium"/>
        </authorList>
    </citation>
    <scope>NUCLEOTIDE SEQUENCE [LARGE SCALE GENOMIC DNA]</scope>
    <source>
        <strain>Bristol N2</strain>
    </source>
</reference>
<reference key="3">
    <citation type="journal article" date="2004" name="RNA">
        <title>Nematode m7GpppG and m3(2,2,7)GpppG decapping: activities in Ascaris embryos and characterization of C. elegans scavenger DcpS.</title>
        <authorList>
            <person name="Cohen L.S."/>
            <person name="Mikhli C."/>
            <person name="Friedman C."/>
            <person name="Jankowska-Anyszka M."/>
            <person name="Stepinski J."/>
            <person name="Darzynkiewicz E."/>
            <person name="Davis R.E."/>
        </authorList>
    </citation>
    <scope>FUNCTION</scope>
    <scope>CATALYTIC ACTIVITY</scope>
    <scope>SUBSTRATE SPECIFICITY</scope>
</reference>
<reference key="4">
    <citation type="journal article" date="2012" name="Biochemistry">
        <title>7-Methylguanosine diphosphate (m(7)GDP) is not hydrolyzed but strongly bound by decapping scavenger (dcpS) enzymes and potently inhibits their activity.</title>
        <authorList>
            <person name="Wypijewska A."/>
            <person name="Bojarska E."/>
            <person name="Lukaszewicz M."/>
            <person name="Stepinski J."/>
            <person name="Jemielity J."/>
            <person name="Davis R.E."/>
            <person name="Darzynkiewicz E."/>
        </authorList>
    </citation>
    <scope>FUNCTION</scope>
    <scope>CATALYTIC ACTIVITY</scope>
    <scope>SUBSTRATE SPECIFICITY</scope>
    <scope>ACTIVITY REGULATION</scope>
</reference>